<feature type="chain" id="PRO_0000134696" description="Cobalt transport protein CbiN">
    <location>
        <begin position="1"/>
        <end position="103"/>
    </location>
</feature>
<feature type="transmembrane region" description="Helical" evidence="1">
    <location>
        <begin position="7"/>
        <end position="27"/>
    </location>
</feature>
<feature type="transmembrane region" description="Helical" evidence="1">
    <location>
        <begin position="60"/>
        <end position="80"/>
    </location>
</feature>
<protein>
    <recommendedName>
        <fullName>Cobalt transport protein CbiN</fullName>
    </recommendedName>
    <alternativeName>
        <fullName>Energy-coupling factor transporter probable substrate-capture protein CbiN</fullName>
        <shortName>ECF transporter S component CbiN</shortName>
    </alternativeName>
</protein>
<keyword id="KW-0997">Cell inner membrane</keyword>
<keyword id="KW-1003">Cell membrane</keyword>
<keyword id="KW-0169">Cobalamin biosynthesis</keyword>
<keyword id="KW-0170">Cobalt</keyword>
<keyword id="KW-0171">Cobalt transport</keyword>
<keyword id="KW-0406">Ion transport</keyword>
<keyword id="KW-0472">Membrane</keyword>
<keyword id="KW-1185">Reference proteome</keyword>
<keyword id="KW-0812">Transmembrane</keyword>
<keyword id="KW-1133">Transmembrane helix</keyword>
<keyword id="KW-0813">Transport</keyword>
<proteinExistence type="evidence at protein level"/>
<organism>
    <name type="scientific">Rhodobacter capsulatus (strain ATCC BAA-309 / NBRC 16581 / SB1003)</name>
    <dbReference type="NCBI Taxonomy" id="272942"/>
    <lineage>
        <taxon>Bacteria</taxon>
        <taxon>Pseudomonadati</taxon>
        <taxon>Pseudomonadota</taxon>
        <taxon>Alphaproteobacteria</taxon>
        <taxon>Rhodobacterales</taxon>
        <taxon>Rhodobacter group</taxon>
        <taxon>Rhodobacter</taxon>
    </lineage>
</organism>
<evidence type="ECO:0000255" key="1"/>
<evidence type="ECO:0000269" key="2">
    <source>
    </source>
</evidence>
<evidence type="ECO:0000269" key="3">
    <source>
    </source>
</evidence>
<evidence type="ECO:0000305" key="4"/>
<name>CBIN_RHOCB</name>
<dbReference type="EMBL" id="AF010496">
    <property type="protein sequence ID" value="AAC16194.1"/>
    <property type="molecule type" value="Genomic_DNA"/>
</dbReference>
<dbReference type="EMBL" id="CP001312">
    <property type="protein sequence ID" value="ADE85780.1"/>
    <property type="molecule type" value="Genomic_DNA"/>
</dbReference>
<dbReference type="PIR" id="T03541">
    <property type="entry name" value="T03541"/>
</dbReference>
<dbReference type="RefSeq" id="WP_013067759.1">
    <property type="nucleotide sequence ID" value="NC_014034.1"/>
</dbReference>
<dbReference type="STRING" id="272942.RCAP_rcc02036"/>
<dbReference type="TCDB" id="3.A.1.23.8">
    <property type="family name" value="the atp-binding cassette (abc) superfamily"/>
</dbReference>
<dbReference type="GeneID" id="31490898"/>
<dbReference type="KEGG" id="rcp:RCAP_rcc02036"/>
<dbReference type="eggNOG" id="COG1930">
    <property type="taxonomic scope" value="Bacteria"/>
</dbReference>
<dbReference type="HOGENOM" id="CLU_136197_2_0_5"/>
<dbReference type="OrthoDB" id="1551318at2"/>
<dbReference type="UniPathway" id="UPA00148"/>
<dbReference type="Proteomes" id="UP000002361">
    <property type="component" value="Chromosome"/>
</dbReference>
<dbReference type="GO" id="GO:0043190">
    <property type="term" value="C:ATP-binding cassette (ABC) transporter complex"/>
    <property type="evidence" value="ECO:0000314"/>
    <property type="project" value="UniProtKB"/>
</dbReference>
<dbReference type="GO" id="GO:0015087">
    <property type="term" value="F:cobalt ion transmembrane transporter activity"/>
    <property type="evidence" value="ECO:0007669"/>
    <property type="project" value="UniProtKB-UniRule"/>
</dbReference>
<dbReference type="GO" id="GO:0009236">
    <property type="term" value="P:cobalamin biosynthetic process"/>
    <property type="evidence" value="ECO:0007669"/>
    <property type="project" value="UniProtKB-UniRule"/>
</dbReference>
<dbReference type="GO" id="GO:0006824">
    <property type="term" value="P:cobalt ion transport"/>
    <property type="evidence" value="ECO:0000314"/>
    <property type="project" value="UniProtKB"/>
</dbReference>
<dbReference type="HAMAP" id="MF_00330">
    <property type="entry name" value="CbiN"/>
    <property type="match status" value="1"/>
</dbReference>
<dbReference type="InterPro" id="IPR003705">
    <property type="entry name" value="CbiN"/>
</dbReference>
<dbReference type="NCBIfam" id="TIGR01165">
    <property type="entry name" value="cbiN"/>
    <property type="match status" value="1"/>
</dbReference>
<dbReference type="NCBIfam" id="NF002780">
    <property type="entry name" value="PRK02898.1"/>
    <property type="match status" value="1"/>
</dbReference>
<dbReference type="PANTHER" id="PTHR38662">
    <property type="entry name" value="COBALT TRANSPORT PROTEIN CBIN"/>
    <property type="match status" value="1"/>
</dbReference>
<dbReference type="PANTHER" id="PTHR38662:SF1">
    <property type="entry name" value="COBALT TRANSPORT PROTEIN CBIN"/>
    <property type="match status" value="1"/>
</dbReference>
<dbReference type="Pfam" id="PF02553">
    <property type="entry name" value="CbiN"/>
    <property type="match status" value="1"/>
</dbReference>
<comment type="function">
    <text evidence="2 3">Part of the energy-coupling factor (ECF) transporter complex CbiMNOQ involved in cobalt import. The complex confers cobalt uptake upon expression in E.coli; can also transport nickel with a very low affinity. A Cbi(MN) fusion protein has about 70% import capacity, but the holo-Cbi(MN)QO complex cannot be isolated, suggesting CbiN may destabilize it.</text>
</comment>
<comment type="pathway">
    <text>Cofactor biosynthesis; adenosylcobalamin biosynthesis.</text>
</comment>
<comment type="subunit">
    <text evidence="2 3">Forms an energy-coupling factor (ECF) transporter complex composed of an ATP-binding protein (A component, CbiO), a transmembrane protein (T component, CbiQ) and 2 possible substrate-capture proteins (S components, CbiM and CbiN) of unknown stoichimetry. Subcomplexes composed of CbiMQO can be isolated from membranes but the CbiN subunit is not isolated in association with them, suggesting it is only loosely associated. Expression of just CbiMN in E.coli confers some cobalt uptake.</text>
</comment>
<comment type="subcellular location">
    <subcellularLocation>
        <location evidence="4">Cell inner membrane</location>
        <topology evidence="4">Multi-pass membrane protein</topology>
    </subcellularLocation>
</comment>
<comment type="similarity">
    <text evidence="4">Belongs to the CbiN family.</text>
</comment>
<sequence>MSSKRTLWLLAGTVALVVVPLLMGGEFGGADGQAAELIEATVPGFAPWADPLWEPPSGEVESLFFALQAALGAFVVGLVIGRRQGAAKTREQNAPAPRSFPAE</sequence>
<reference key="1">
    <citation type="journal article" date="1997" name="Proc. Natl. Acad. Sci. U.S.A.">
        <title>Sequence of a 189-kb segment of the chromosome of Rhodobacter capsulatus SB1003.</title>
        <authorList>
            <person name="Vlcek C."/>
            <person name="Paces V."/>
            <person name="Maltsev N."/>
            <person name="Paces J."/>
            <person name="Haselkorn R."/>
            <person name="Fonstein M."/>
        </authorList>
    </citation>
    <scope>NUCLEOTIDE SEQUENCE [GENOMIC DNA]</scope>
    <source>
        <strain>ATCC BAA-309 / NBRC 16581 / SB1003</strain>
    </source>
</reference>
<reference key="2">
    <citation type="journal article" date="2010" name="J. Bacteriol.">
        <title>Complete genome sequence of the photosynthetic purple nonsulfur bacterium Rhodobacter capsulatus SB 1003.</title>
        <authorList>
            <person name="Strnad H."/>
            <person name="Lapidus A."/>
            <person name="Paces J."/>
            <person name="Ulbrich P."/>
            <person name="Vlcek C."/>
            <person name="Paces V."/>
            <person name="Haselkorn R."/>
        </authorList>
    </citation>
    <scope>NUCLEOTIDE SEQUENCE [LARGE SCALE GENOMIC DNA]</scope>
    <source>
        <strain>ATCC BAA-309 / NBRC 16581 / SB1003</strain>
    </source>
</reference>
<reference key="3">
    <citation type="journal article" date="2006" name="J. Bacteriol.">
        <title>Comparative and functional genomic analysis of prokaryotic nickel and cobalt uptake transporters: evidence for a novel group of ATP-binding cassette transporters.</title>
        <authorList>
            <person name="Rodionov D.A."/>
            <person name="Hebbeln P."/>
            <person name="Gelfand M.S."/>
            <person name="Eitinger T."/>
        </authorList>
    </citation>
    <scope>FUNCTION IN COBALT TRANSPORT</scope>
    <scope>SUBSTRATES</scope>
    <scope>SUBUNIT</scope>
    <scope>EXPRESSION IN E.COLI</scope>
    <source>
        <strain>ATCC BAA-309 / NBRC 16581 / SB1003</strain>
    </source>
</reference>
<reference key="4">
    <citation type="journal article" date="2010" name="Res. Microbiol.">
        <title>A bipartite S unit of an ECF-type cobalt transporter.</title>
        <authorList>
            <person name="Siche S."/>
            <person name="Neubauer O."/>
            <person name="Hebbeln P."/>
            <person name="Eitinger T."/>
        </authorList>
    </citation>
    <scope>FUNCTION IN COBALT TRANSPORT</scope>
    <scope>SUBUNIT</scope>
    <scope>SUBCELLULAR LOCATION</scope>
    <source>
        <strain>ATCC BAA-309 / NBRC 16581 / SB1003</strain>
    </source>
</reference>
<gene>
    <name type="primary">cbiN</name>
    <name type="ordered locus">RCAP_rcc02036</name>
</gene>
<accession>O68104</accession>
<accession>D5AUZ8</accession>